<gene>
    <name evidence="1" type="primary">pyrG</name>
    <name type="ordered locus">BF2602</name>
</gene>
<feature type="chain" id="PRO_0000266062" description="CTP synthase">
    <location>
        <begin position="1"/>
        <end position="533"/>
    </location>
</feature>
<feature type="domain" description="Glutamine amidotransferase type-1" evidence="1">
    <location>
        <begin position="301"/>
        <end position="533"/>
    </location>
</feature>
<feature type="region of interest" description="Amidoligase domain" evidence="1">
    <location>
        <begin position="1"/>
        <end position="268"/>
    </location>
</feature>
<feature type="active site" description="Nucleophile; for glutamine hydrolysis" evidence="1">
    <location>
        <position position="383"/>
    </location>
</feature>
<feature type="active site" evidence="1">
    <location>
        <position position="509"/>
    </location>
</feature>
<feature type="active site" evidence="1">
    <location>
        <position position="511"/>
    </location>
</feature>
<feature type="binding site" evidence="1">
    <location>
        <position position="15"/>
    </location>
    <ligand>
        <name>CTP</name>
        <dbReference type="ChEBI" id="CHEBI:37563"/>
        <note>allosteric inhibitor</note>
    </ligand>
</feature>
<feature type="binding site" evidence="1">
    <location>
        <position position="15"/>
    </location>
    <ligand>
        <name>UTP</name>
        <dbReference type="ChEBI" id="CHEBI:46398"/>
    </ligand>
</feature>
<feature type="binding site" evidence="1">
    <location>
        <begin position="16"/>
        <end position="21"/>
    </location>
    <ligand>
        <name>ATP</name>
        <dbReference type="ChEBI" id="CHEBI:30616"/>
    </ligand>
</feature>
<feature type="binding site" evidence="1">
    <location>
        <position position="56"/>
    </location>
    <ligand>
        <name>L-glutamine</name>
        <dbReference type="ChEBI" id="CHEBI:58359"/>
    </ligand>
</feature>
<feature type="binding site" evidence="1">
    <location>
        <position position="73"/>
    </location>
    <ligand>
        <name>ATP</name>
        <dbReference type="ChEBI" id="CHEBI:30616"/>
    </ligand>
</feature>
<feature type="binding site" evidence="1">
    <location>
        <position position="73"/>
    </location>
    <ligand>
        <name>Mg(2+)</name>
        <dbReference type="ChEBI" id="CHEBI:18420"/>
    </ligand>
</feature>
<feature type="binding site" evidence="1">
    <location>
        <position position="143"/>
    </location>
    <ligand>
        <name>Mg(2+)</name>
        <dbReference type="ChEBI" id="CHEBI:18420"/>
    </ligand>
</feature>
<feature type="binding site" evidence="1">
    <location>
        <begin position="150"/>
        <end position="152"/>
    </location>
    <ligand>
        <name>CTP</name>
        <dbReference type="ChEBI" id="CHEBI:37563"/>
        <note>allosteric inhibitor</note>
    </ligand>
</feature>
<feature type="binding site" evidence="1">
    <location>
        <begin position="189"/>
        <end position="194"/>
    </location>
    <ligand>
        <name>CTP</name>
        <dbReference type="ChEBI" id="CHEBI:37563"/>
        <note>allosteric inhibitor</note>
    </ligand>
</feature>
<feature type="binding site" evidence="1">
    <location>
        <begin position="189"/>
        <end position="194"/>
    </location>
    <ligand>
        <name>UTP</name>
        <dbReference type="ChEBI" id="CHEBI:46398"/>
    </ligand>
</feature>
<feature type="binding site" evidence="1">
    <location>
        <position position="225"/>
    </location>
    <ligand>
        <name>CTP</name>
        <dbReference type="ChEBI" id="CHEBI:37563"/>
        <note>allosteric inhibitor</note>
    </ligand>
</feature>
<feature type="binding site" evidence="1">
    <location>
        <position position="225"/>
    </location>
    <ligand>
        <name>UTP</name>
        <dbReference type="ChEBI" id="CHEBI:46398"/>
    </ligand>
</feature>
<feature type="binding site" evidence="1">
    <location>
        <position position="356"/>
    </location>
    <ligand>
        <name>L-glutamine</name>
        <dbReference type="ChEBI" id="CHEBI:58359"/>
    </ligand>
</feature>
<feature type="binding site" evidence="1">
    <location>
        <begin position="384"/>
        <end position="387"/>
    </location>
    <ligand>
        <name>L-glutamine</name>
        <dbReference type="ChEBI" id="CHEBI:58359"/>
    </ligand>
</feature>
<feature type="binding site" evidence="1">
    <location>
        <position position="407"/>
    </location>
    <ligand>
        <name>L-glutamine</name>
        <dbReference type="ChEBI" id="CHEBI:58359"/>
    </ligand>
</feature>
<feature type="binding site" evidence="1">
    <location>
        <position position="464"/>
    </location>
    <ligand>
        <name>L-glutamine</name>
        <dbReference type="ChEBI" id="CHEBI:58359"/>
    </ligand>
</feature>
<organism>
    <name type="scientific">Bacteroides fragilis (strain YCH46)</name>
    <dbReference type="NCBI Taxonomy" id="295405"/>
    <lineage>
        <taxon>Bacteria</taxon>
        <taxon>Pseudomonadati</taxon>
        <taxon>Bacteroidota</taxon>
        <taxon>Bacteroidia</taxon>
        <taxon>Bacteroidales</taxon>
        <taxon>Bacteroidaceae</taxon>
        <taxon>Bacteroides</taxon>
    </lineage>
</organism>
<protein>
    <recommendedName>
        <fullName evidence="1">CTP synthase</fullName>
        <ecNumber evidence="1">6.3.4.2</ecNumber>
    </recommendedName>
    <alternativeName>
        <fullName evidence="1">Cytidine 5'-triphosphate synthase</fullName>
    </alternativeName>
    <alternativeName>
        <fullName evidence="1">Cytidine triphosphate synthetase</fullName>
        <shortName evidence="1">CTP synthetase</shortName>
        <shortName evidence="1">CTPS</shortName>
    </alternativeName>
    <alternativeName>
        <fullName evidence="1">UTP--ammonia ligase</fullName>
    </alternativeName>
</protein>
<dbReference type="EC" id="6.3.4.2" evidence="1"/>
<dbReference type="EMBL" id="AP006841">
    <property type="protein sequence ID" value="BAD49352.1"/>
    <property type="molecule type" value="Genomic_DNA"/>
</dbReference>
<dbReference type="RefSeq" id="WP_005788170.1">
    <property type="nucleotide sequence ID" value="NZ_UYXF01000003.1"/>
</dbReference>
<dbReference type="RefSeq" id="YP_099886.1">
    <property type="nucleotide sequence ID" value="NC_006347.1"/>
</dbReference>
<dbReference type="SMR" id="Q64T27"/>
<dbReference type="STRING" id="295405.BF2602"/>
<dbReference type="KEGG" id="bfr:BF2602"/>
<dbReference type="PATRIC" id="fig|295405.11.peg.2512"/>
<dbReference type="HOGENOM" id="CLU_011675_5_0_10"/>
<dbReference type="OrthoDB" id="9801107at2"/>
<dbReference type="UniPathway" id="UPA00159">
    <property type="reaction ID" value="UER00277"/>
</dbReference>
<dbReference type="Proteomes" id="UP000002197">
    <property type="component" value="Chromosome"/>
</dbReference>
<dbReference type="GO" id="GO:0005829">
    <property type="term" value="C:cytosol"/>
    <property type="evidence" value="ECO:0007669"/>
    <property type="project" value="TreeGrafter"/>
</dbReference>
<dbReference type="GO" id="GO:0005524">
    <property type="term" value="F:ATP binding"/>
    <property type="evidence" value="ECO:0007669"/>
    <property type="project" value="UniProtKB-KW"/>
</dbReference>
<dbReference type="GO" id="GO:0003883">
    <property type="term" value="F:CTP synthase activity"/>
    <property type="evidence" value="ECO:0007669"/>
    <property type="project" value="UniProtKB-UniRule"/>
</dbReference>
<dbReference type="GO" id="GO:0004359">
    <property type="term" value="F:glutaminase activity"/>
    <property type="evidence" value="ECO:0007669"/>
    <property type="project" value="RHEA"/>
</dbReference>
<dbReference type="GO" id="GO:0042802">
    <property type="term" value="F:identical protein binding"/>
    <property type="evidence" value="ECO:0007669"/>
    <property type="project" value="TreeGrafter"/>
</dbReference>
<dbReference type="GO" id="GO:0046872">
    <property type="term" value="F:metal ion binding"/>
    <property type="evidence" value="ECO:0007669"/>
    <property type="project" value="UniProtKB-KW"/>
</dbReference>
<dbReference type="GO" id="GO:0044210">
    <property type="term" value="P:'de novo' CTP biosynthetic process"/>
    <property type="evidence" value="ECO:0007669"/>
    <property type="project" value="UniProtKB-UniRule"/>
</dbReference>
<dbReference type="GO" id="GO:0019856">
    <property type="term" value="P:pyrimidine nucleobase biosynthetic process"/>
    <property type="evidence" value="ECO:0007669"/>
    <property type="project" value="TreeGrafter"/>
</dbReference>
<dbReference type="CDD" id="cd03113">
    <property type="entry name" value="CTPS_N"/>
    <property type="match status" value="1"/>
</dbReference>
<dbReference type="CDD" id="cd01746">
    <property type="entry name" value="GATase1_CTP_Synthase"/>
    <property type="match status" value="1"/>
</dbReference>
<dbReference type="FunFam" id="3.40.50.300:FF:000009">
    <property type="entry name" value="CTP synthase"/>
    <property type="match status" value="1"/>
</dbReference>
<dbReference type="FunFam" id="3.40.50.880:FF:000002">
    <property type="entry name" value="CTP synthase"/>
    <property type="match status" value="1"/>
</dbReference>
<dbReference type="Gene3D" id="3.40.50.880">
    <property type="match status" value="1"/>
</dbReference>
<dbReference type="Gene3D" id="3.40.50.300">
    <property type="entry name" value="P-loop containing nucleotide triphosphate hydrolases"/>
    <property type="match status" value="1"/>
</dbReference>
<dbReference type="HAMAP" id="MF_01227">
    <property type="entry name" value="PyrG"/>
    <property type="match status" value="1"/>
</dbReference>
<dbReference type="InterPro" id="IPR029062">
    <property type="entry name" value="Class_I_gatase-like"/>
</dbReference>
<dbReference type="InterPro" id="IPR004468">
    <property type="entry name" value="CTP_synthase"/>
</dbReference>
<dbReference type="InterPro" id="IPR017456">
    <property type="entry name" value="CTP_synthase_N"/>
</dbReference>
<dbReference type="InterPro" id="IPR017926">
    <property type="entry name" value="GATASE"/>
</dbReference>
<dbReference type="InterPro" id="IPR033828">
    <property type="entry name" value="GATase1_CTP_Synthase"/>
</dbReference>
<dbReference type="InterPro" id="IPR027417">
    <property type="entry name" value="P-loop_NTPase"/>
</dbReference>
<dbReference type="NCBIfam" id="NF003792">
    <property type="entry name" value="PRK05380.1"/>
    <property type="match status" value="1"/>
</dbReference>
<dbReference type="NCBIfam" id="TIGR00337">
    <property type="entry name" value="PyrG"/>
    <property type="match status" value="1"/>
</dbReference>
<dbReference type="PANTHER" id="PTHR11550">
    <property type="entry name" value="CTP SYNTHASE"/>
    <property type="match status" value="1"/>
</dbReference>
<dbReference type="PANTHER" id="PTHR11550:SF0">
    <property type="entry name" value="CTP SYNTHASE-RELATED"/>
    <property type="match status" value="1"/>
</dbReference>
<dbReference type="Pfam" id="PF06418">
    <property type="entry name" value="CTP_synth_N"/>
    <property type="match status" value="1"/>
</dbReference>
<dbReference type="Pfam" id="PF00117">
    <property type="entry name" value="GATase"/>
    <property type="match status" value="1"/>
</dbReference>
<dbReference type="SUPFAM" id="SSF52317">
    <property type="entry name" value="Class I glutamine amidotransferase-like"/>
    <property type="match status" value="1"/>
</dbReference>
<dbReference type="SUPFAM" id="SSF52540">
    <property type="entry name" value="P-loop containing nucleoside triphosphate hydrolases"/>
    <property type="match status" value="1"/>
</dbReference>
<dbReference type="PROSITE" id="PS51273">
    <property type="entry name" value="GATASE_TYPE_1"/>
    <property type="match status" value="1"/>
</dbReference>
<keyword id="KW-0067">ATP-binding</keyword>
<keyword id="KW-0315">Glutamine amidotransferase</keyword>
<keyword id="KW-0436">Ligase</keyword>
<keyword id="KW-0460">Magnesium</keyword>
<keyword id="KW-0479">Metal-binding</keyword>
<keyword id="KW-0547">Nucleotide-binding</keyword>
<keyword id="KW-0665">Pyrimidine biosynthesis</keyword>
<evidence type="ECO:0000255" key="1">
    <source>
        <dbReference type="HAMAP-Rule" id="MF_01227"/>
    </source>
</evidence>
<sequence length="533" mass="60031">MGETKYIFVTGGVASSLGKGIISSSIGKLLQARGYKVTIQKFDPYINIDPGTLNPYEHGECYVTVDGHEADLDLGHYERFLGIQTTKANNITTGRIYKSVIDKERRGDYLGKTIQVIPHITDEIKRNVKLLGNKYKFDFVITEIGGTVGDIESLPYLESIRQLKWELGQNALCVHLTYVPFLSAAQELKTKPTQHSVKELQSLGVQPDILVLRTEHDLNTNLRKKVALFCNVAENAVVQSIDASTIYEVPLLMQEQGLDETILQKMGLPVGERPPLGPWKDFLNRRANATETVTIAMVGKYVELQDAYKSILESLSQAATYNDRKVKIEYVSSEHLTPDNVDEQLGHVNGVVICPGFGSRGIEGKFVAAKYTREHNIPTFGICLGMQCMAIEFARNVLGYADANSIEMDEKTKHNVIDIMEEQKAITNMGGTMRLGAYECVLKKDSKVYEAYKEEHIQERHRHRYEFNNDYRKQFEEAGMKCVGINPESDLVEIVEIPTLKWYIGTQFHPEYSSTVLHPHPLFVSFIKAAIDK</sequence>
<name>PYRG_BACFR</name>
<proteinExistence type="inferred from homology"/>
<accession>Q64T27</accession>
<comment type="function">
    <text evidence="1">Catalyzes the ATP-dependent amination of UTP to CTP with either L-glutamine or ammonia as the source of nitrogen. Regulates intracellular CTP levels through interactions with the four ribonucleotide triphosphates.</text>
</comment>
<comment type="catalytic activity">
    <reaction evidence="1">
        <text>UTP + L-glutamine + ATP + H2O = CTP + L-glutamate + ADP + phosphate + 2 H(+)</text>
        <dbReference type="Rhea" id="RHEA:26426"/>
        <dbReference type="ChEBI" id="CHEBI:15377"/>
        <dbReference type="ChEBI" id="CHEBI:15378"/>
        <dbReference type="ChEBI" id="CHEBI:29985"/>
        <dbReference type="ChEBI" id="CHEBI:30616"/>
        <dbReference type="ChEBI" id="CHEBI:37563"/>
        <dbReference type="ChEBI" id="CHEBI:43474"/>
        <dbReference type="ChEBI" id="CHEBI:46398"/>
        <dbReference type="ChEBI" id="CHEBI:58359"/>
        <dbReference type="ChEBI" id="CHEBI:456216"/>
        <dbReference type="EC" id="6.3.4.2"/>
    </reaction>
</comment>
<comment type="catalytic activity">
    <reaction evidence="1">
        <text>L-glutamine + H2O = L-glutamate + NH4(+)</text>
        <dbReference type="Rhea" id="RHEA:15889"/>
        <dbReference type="ChEBI" id="CHEBI:15377"/>
        <dbReference type="ChEBI" id="CHEBI:28938"/>
        <dbReference type="ChEBI" id="CHEBI:29985"/>
        <dbReference type="ChEBI" id="CHEBI:58359"/>
    </reaction>
</comment>
<comment type="catalytic activity">
    <reaction evidence="1">
        <text>UTP + NH4(+) + ATP = CTP + ADP + phosphate + 2 H(+)</text>
        <dbReference type="Rhea" id="RHEA:16597"/>
        <dbReference type="ChEBI" id="CHEBI:15378"/>
        <dbReference type="ChEBI" id="CHEBI:28938"/>
        <dbReference type="ChEBI" id="CHEBI:30616"/>
        <dbReference type="ChEBI" id="CHEBI:37563"/>
        <dbReference type="ChEBI" id="CHEBI:43474"/>
        <dbReference type="ChEBI" id="CHEBI:46398"/>
        <dbReference type="ChEBI" id="CHEBI:456216"/>
    </reaction>
</comment>
<comment type="activity regulation">
    <text evidence="1">Allosterically activated by GTP, when glutamine is the substrate; GTP has no effect on the reaction when ammonia is the substrate. The allosteric effector GTP functions by stabilizing the protein conformation that binds the tetrahedral intermediate(s) formed during glutamine hydrolysis. Inhibited by the product CTP, via allosteric rather than competitive inhibition.</text>
</comment>
<comment type="pathway">
    <text evidence="1">Pyrimidine metabolism; CTP biosynthesis via de novo pathway; CTP from UDP: step 2/2.</text>
</comment>
<comment type="subunit">
    <text evidence="1">Homotetramer.</text>
</comment>
<comment type="miscellaneous">
    <text evidence="1">CTPSs have evolved a hybrid strategy for distinguishing between UTP and CTP. The overlapping regions of the product feedback inhibitory and substrate sites recognize a common feature in both compounds, the triphosphate moiety. To differentiate isosteric substrate and product pyrimidine rings, an additional pocket far from the expected kinase/ligase catalytic site, specifically recognizes the cytosine and ribose portions of the product inhibitor.</text>
</comment>
<comment type="similarity">
    <text evidence="1">Belongs to the CTP synthase family.</text>
</comment>
<reference key="1">
    <citation type="journal article" date="2004" name="Proc. Natl. Acad. Sci. U.S.A.">
        <title>Genomic analysis of Bacteroides fragilis reveals extensive DNA inversions regulating cell surface adaptation.</title>
        <authorList>
            <person name="Kuwahara T."/>
            <person name="Yamashita A."/>
            <person name="Hirakawa H."/>
            <person name="Nakayama H."/>
            <person name="Toh H."/>
            <person name="Okada N."/>
            <person name="Kuhara S."/>
            <person name="Hattori M."/>
            <person name="Hayashi T."/>
            <person name="Ohnishi Y."/>
        </authorList>
    </citation>
    <scope>NUCLEOTIDE SEQUENCE [LARGE SCALE GENOMIC DNA]</scope>
    <source>
        <strain>YCH46</strain>
    </source>
</reference>